<feature type="signal peptide" evidence="4">
    <location>
        <begin position="1"/>
        <end position="19"/>
    </location>
</feature>
<feature type="chain" id="PRO_0000026525" description="Vacuolar-processing enzyme">
    <location>
        <begin position="20"/>
        <end position="493"/>
    </location>
</feature>
<feature type="active site" evidence="1">
    <location>
        <position position="174"/>
    </location>
</feature>
<feature type="active site" description="Nucleophile" evidence="1">
    <location>
        <position position="216"/>
    </location>
</feature>
<feature type="site" description="Required for post-translational maturation and enzyme activity" evidence="3">
    <location>
        <position position="263"/>
    </location>
</feature>
<feature type="glycosylation site" description="N-linked (GlcNAc...) asparagine" evidence="5">
    <location>
        <position position="147"/>
    </location>
</feature>
<feature type="glycosylation site" description="N-linked (GlcNAc...) asparagine" evidence="5">
    <location>
        <position position="295"/>
    </location>
</feature>
<feature type="glycosylation site" description="N-linked (GlcNAc...) asparagine" evidence="5">
    <location>
        <position position="331"/>
    </location>
</feature>
<feature type="disulfide bond" evidence="2">
    <location>
        <begin position="249"/>
        <end position="263"/>
    </location>
</feature>
<feature type="disulfide bond" evidence="2">
    <location>
        <begin position="429"/>
        <end position="459"/>
    </location>
</feature>
<feature type="disulfide bond" evidence="2">
    <location>
        <begin position="441"/>
        <end position="476"/>
    </location>
</feature>
<feature type="sequence variant">
    <original>S</original>
    <variation>L</variation>
    <location>
        <position position="88"/>
    </location>
</feature>
<feature type="sequence variant">
    <original>K</original>
    <variation>R</variation>
    <location>
        <position position="89"/>
    </location>
</feature>
<feature type="sequence variant">
    <original>D</original>
    <variation>E</variation>
    <location>
        <position position="228"/>
    </location>
</feature>
<feature type="sequence variant">
    <original>P</original>
    <variation>S</variation>
    <location>
        <position position="254"/>
    </location>
</feature>
<feature type="sequence variant">
    <original>R</original>
    <variation>H</variation>
    <location>
        <position position="366"/>
    </location>
</feature>
<evidence type="ECO:0000250" key="1">
    <source>
        <dbReference type="UniProtKB" id="O89017"/>
    </source>
</evidence>
<evidence type="ECO:0000250" key="2">
    <source>
        <dbReference type="UniProtKB" id="P49046"/>
    </source>
</evidence>
<evidence type="ECO:0000250" key="3">
    <source>
        <dbReference type="UniProtKB" id="Q84LM2"/>
    </source>
</evidence>
<evidence type="ECO:0000255" key="4"/>
<evidence type="ECO:0000255" key="5">
    <source>
        <dbReference type="PROSITE-ProRule" id="PRU00498"/>
    </source>
</evidence>
<evidence type="ECO:0000305" key="6"/>
<sequence>MGSSQLSTLLFFTIVVTFLTVVSSGRDLPGDYLRLPSETSRFFREPKNDDDFEGTRWAILLAGSNGYWNYRHQSDVCHAYQLLRKGGSKEENIIVFMYDDIASNEENPRPGVIINKPDGDDVYAGVPKDYTGAEVHADNFYAALLGNKSALTGGSGKVVDSGPNDHIFVYYTDHGGPGVLGMPVGPYLYASDLNEVLKKKHASGTYKSLVFYLEACESGSIFEGLLPDDLNIYATTASNAEESSWGYYCPGDKPPPPPEYSTCLGDLYSIAWMEDSEVHNLQTESLQQQYKLVKNRTISEPYGSHVMEYGDIGLSKNDLYQYLGTNPANDNNSFVDETENSLKLRTPSAAVNQRDADLIHFWEKFRKAPEGSSQKNEAEKQVLEAMSHRKHIDNSVKLIGQLLFGIEKGTELLDVVRPAGSPLVDNWDCLKTMVKTFETHCGSLSQYGMKHMRSFANICNAGIPNEPMAEASAQACASIPANPWSSLQGGFSA</sequence>
<comment type="function">
    <text>Asparagine-specific endopeptidase involved in the processing of vacuolar seed protein precursors into the mature forms.</text>
</comment>
<comment type="similarity">
    <text evidence="6">Belongs to the peptidase C13 family.</text>
</comment>
<proteinExistence type="evidence at protein level"/>
<keyword id="KW-1015">Disulfide bond</keyword>
<keyword id="KW-0325">Glycoprotein</keyword>
<keyword id="KW-0378">Hydrolase</keyword>
<keyword id="KW-0645">Protease</keyword>
<keyword id="KW-0732">Signal</keyword>
<keyword id="KW-0788">Thiol protease</keyword>
<accession>P49044</accession>
<organism>
    <name type="scientific">Vicia sativa</name>
    <name type="common">Spring vetch</name>
    <name type="synonym">Tare</name>
    <dbReference type="NCBI Taxonomy" id="3908"/>
    <lineage>
        <taxon>Eukaryota</taxon>
        <taxon>Viridiplantae</taxon>
        <taxon>Streptophyta</taxon>
        <taxon>Embryophyta</taxon>
        <taxon>Tracheophyta</taxon>
        <taxon>Spermatophyta</taxon>
        <taxon>Magnoliopsida</taxon>
        <taxon>eudicotyledons</taxon>
        <taxon>Gunneridae</taxon>
        <taxon>Pentapetalae</taxon>
        <taxon>rosids</taxon>
        <taxon>fabids</taxon>
        <taxon>Fabales</taxon>
        <taxon>Fabaceae</taxon>
        <taxon>Papilionoideae</taxon>
        <taxon>50 kb inversion clade</taxon>
        <taxon>NPAAA clade</taxon>
        <taxon>Hologalegina</taxon>
        <taxon>IRL clade</taxon>
        <taxon>Fabeae</taxon>
        <taxon>Vicia</taxon>
    </lineage>
</organism>
<name>VPE_VICSA</name>
<reference key="1">
    <citation type="journal article" date="1995" name="Eur. J. Biochem.">
        <title>Purification, cDNA cloning and characterization of proteinase B, an asparagine-specific endopeptidase from germinating vetch (Vicia sativa L.) seeds.</title>
        <authorList>
            <person name="Becker C."/>
            <person name="Shutov A.D."/>
            <person name="Nong V.H."/>
            <person name="Senyuk V.I."/>
            <person name="Jung R."/>
            <person name="Horstmann C."/>
            <person name="Fischer J."/>
            <person name="Nielsen N.C."/>
            <person name="Muntz K."/>
        </authorList>
    </citation>
    <scope>NUCLEOTIDE SEQUENCE [MRNA]</scope>
    <source>
        <tissue>Seed</tissue>
    </source>
</reference>
<reference key="2">
    <citation type="journal article" date="1982" name="Biokhimiia">
        <title>Purification and partial characterization of protease B from germinating vetch seeds.</title>
        <authorList>
            <person name="Shutov A.D."/>
            <person name="Do N.L."/>
            <person name="Vaintraub I.A."/>
        </authorList>
    </citation>
    <scope>CHARACTERIZATION</scope>
    <source>
        <tissue>Seed</tissue>
    </source>
</reference>
<dbReference type="EC" id="3.4.22.-"/>
<dbReference type="EMBL" id="Z34899">
    <property type="protein sequence ID" value="CAA84383.1"/>
    <property type="molecule type" value="mRNA"/>
</dbReference>
<dbReference type="PIR" id="S68984">
    <property type="entry name" value="S49175"/>
</dbReference>
<dbReference type="SMR" id="P49044"/>
<dbReference type="MEROPS" id="C13.002"/>
<dbReference type="GO" id="GO:0005773">
    <property type="term" value="C:vacuole"/>
    <property type="evidence" value="ECO:0007669"/>
    <property type="project" value="GOC"/>
</dbReference>
<dbReference type="GO" id="GO:0004197">
    <property type="term" value="F:cysteine-type endopeptidase activity"/>
    <property type="evidence" value="ECO:0007669"/>
    <property type="project" value="InterPro"/>
</dbReference>
<dbReference type="GO" id="GO:0051603">
    <property type="term" value="P:proteolysis involved in protein catabolic process"/>
    <property type="evidence" value="ECO:0007669"/>
    <property type="project" value="InterPro"/>
</dbReference>
<dbReference type="GO" id="GO:0006624">
    <property type="term" value="P:vacuolar protein processing"/>
    <property type="evidence" value="ECO:0007669"/>
    <property type="project" value="TreeGrafter"/>
</dbReference>
<dbReference type="CDD" id="cd21115">
    <property type="entry name" value="legumain_C"/>
    <property type="match status" value="1"/>
</dbReference>
<dbReference type="FunFam" id="1.10.132.130:FF:000001">
    <property type="entry name" value="Vacuolar-processing enzyme beta-isozyme"/>
    <property type="match status" value="1"/>
</dbReference>
<dbReference type="FunFam" id="3.40.50.1460:FF:000005">
    <property type="entry name" value="Vacuolar-processing enzyme beta-isozyme"/>
    <property type="match status" value="1"/>
</dbReference>
<dbReference type="Gene3D" id="1.10.132.130">
    <property type="match status" value="1"/>
</dbReference>
<dbReference type="Gene3D" id="3.40.50.1460">
    <property type="match status" value="1"/>
</dbReference>
<dbReference type="InterPro" id="IPR043577">
    <property type="entry name" value="AE"/>
</dbReference>
<dbReference type="InterPro" id="IPR048501">
    <property type="entry name" value="Legum_prodom"/>
</dbReference>
<dbReference type="InterPro" id="IPR046427">
    <property type="entry name" value="Legumain_prodom_sf"/>
</dbReference>
<dbReference type="InterPro" id="IPR001096">
    <property type="entry name" value="Peptidase_C13"/>
</dbReference>
<dbReference type="PANTHER" id="PTHR12000">
    <property type="entry name" value="HEMOGLOBINASE FAMILY MEMBER"/>
    <property type="match status" value="1"/>
</dbReference>
<dbReference type="PANTHER" id="PTHR12000:SF50">
    <property type="entry name" value="VACUOLAR-PROCESSING ENZYME GAMMA-ISOZYME"/>
    <property type="match status" value="1"/>
</dbReference>
<dbReference type="Pfam" id="PF20985">
    <property type="entry name" value="Legum_prodom"/>
    <property type="match status" value="1"/>
</dbReference>
<dbReference type="Pfam" id="PF01650">
    <property type="entry name" value="Peptidase_C13"/>
    <property type="match status" value="1"/>
</dbReference>
<dbReference type="PIRSF" id="PIRSF500139">
    <property type="entry name" value="AE"/>
    <property type="match status" value="1"/>
</dbReference>
<dbReference type="PIRSF" id="PIRSF019663">
    <property type="entry name" value="Legumain"/>
    <property type="match status" value="1"/>
</dbReference>
<dbReference type="PRINTS" id="PR00776">
    <property type="entry name" value="HEMOGLOBNASE"/>
</dbReference>
<protein>
    <recommendedName>
        <fullName>Vacuolar-processing enzyme</fullName>
        <shortName>VPE</shortName>
        <ecNumber>3.4.22.-</ecNumber>
    </recommendedName>
    <alternativeName>
        <fullName>Proteinase B</fullName>
    </alternativeName>
</protein>